<feature type="chain" id="PRO_0000449882" description="Adenylate-forming reductase">
    <location>
        <begin position="1"/>
        <end position="1069"/>
    </location>
</feature>
<feature type="domain" description="Carrier" evidence="3">
    <location>
        <begin position="576"/>
        <end position="656"/>
    </location>
</feature>
<feature type="region of interest" description="Adenylation (A) domain" evidence="2 9">
    <location>
        <begin position="20"/>
        <end position="391"/>
    </location>
</feature>
<feature type="region of interest" description="Reductase (R) domain" evidence="2 9">
    <location>
        <begin position="686"/>
        <end position="1032"/>
    </location>
</feature>
<feature type="binding site" evidence="1">
    <location>
        <position position="262"/>
    </location>
    <ligand>
        <name>AMP</name>
        <dbReference type="ChEBI" id="CHEBI:456215"/>
    </ligand>
</feature>
<feature type="binding site" evidence="1">
    <location>
        <begin position="357"/>
        <end position="358"/>
    </location>
    <ligand>
        <name>AMP</name>
        <dbReference type="ChEBI" id="CHEBI:456215"/>
    </ligand>
</feature>
<feature type="binding site" evidence="1">
    <location>
        <position position="362"/>
    </location>
    <ligand>
        <name>AMP</name>
        <dbReference type="ChEBI" id="CHEBI:456215"/>
    </ligand>
</feature>
<feature type="binding site" evidence="1">
    <location>
        <begin position="437"/>
        <end position="440"/>
    </location>
    <ligand>
        <name>AMP</name>
        <dbReference type="ChEBI" id="CHEBI:456215"/>
    </ligand>
</feature>
<feature type="binding site" evidence="1">
    <location>
        <begin position="693"/>
        <end position="696"/>
    </location>
    <ligand>
        <name>NADP(+)</name>
        <dbReference type="ChEBI" id="CHEBI:58349"/>
    </ligand>
</feature>
<feature type="binding site" evidence="1">
    <location>
        <position position="719"/>
    </location>
    <ligand>
        <name>NADP(+)</name>
        <dbReference type="ChEBI" id="CHEBI:58349"/>
    </ligand>
</feature>
<feature type="binding site" evidence="1">
    <location>
        <begin position="785"/>
        <end position="787"/>
    </location>
    <ligand>
        <name>NADP(+)</name>
        <dbReference type="ChEBI" id="CHEBI:58349"/>
    </ligand>
</feature>
<feature type="binding site" evidence="1">
    <location>
        <position position="863"/>
    </location>
    <ligand>
        <name>NADP(+)</name>
        <dbReference type="ChEBI" id="CHEBI:58349"/>
    </ligand>
</feature>
<feature type="binding site" evidence="1">
    <location>
        <position position="867"/>
    </location>
    <ligand>
        <name>NADP(+)</name>
        <dbReference type="ChEBI" id="CHEBI:58349"/>
    </ligand>
</feature>
<feature type="modified residue" description="O-(pantetheine 4'-phosphoryl)serine" evidence="3">
    <location>
        <position position="612"/>
    </location>
</feature>
<feature type="mutagenesis site" description="Abolishes the production of 2,4-dihydroxy 5,6-dimethyl benzaldehyde but accumulates 5-methylorsellinic acid." evidence="4">
    <original>S</original>
    <variation>A</variation>
    <location>
        <position position="612"/>
    </location>
</feature>
<feature type="mutagenesis site" description="Almost completely abolishes the catalytic activity." evidence="4">
    <original>T</original>
    <variation>A</variation>
    <location>
        <position position="690"/>
    </location>
</feature>
<feature type="mutagenesis site" description="Almost completely abolishes the catalytic activity." evidence="4">
    <original>Y</original>
    <variation>F</variation>
    <location>
        <position position="863"/>
    </location>
</feature>
<feature type="mutagenesis site" description="Completely abolishes the catalytic activity." evidence="4">
    <original>K</original>
    <variation>A</variation>
    <location>
        <position position="867"/>
    </location>
</feature>
<protein>
    <recommendedName>
        <fullName evidence="8">Adenylate-forming reductase</fullName>
        <ecNumber evidence="4">1.2.1.-</ecNumber>
    </recommendedName>
    <alternativeName>
        <fullName evidence="7">Azasperpyranone A biosynthesis cluster A protein ATEG_03630</fullName>
    </alternativeName>
    <alternativeName>
        <fullName evidence="6">Nonribosomal peptide synthase-like protein ATEG_03630</fullName>
        <shortName evidence="6">NRPS-like protein ATEG_03630</shortName>
    </alternativeName>
</protein>
<organism>
    <name type="scientific">Aspergillus terreus (strain NIH 2624 / FGSC A1156)</name>
    <dbReference type="NCBI Taxonomy" id="341663"/>
    <lineage>
        <taxon>Eukaryota</taxon>
        <taxon>Fungi</taxon>
        <taxon>Dikarya</taxon>
        <taxon>Ascomycota</taxon>
        <taxon>Pezizomycotina</taxon>
        <taxon>Eurotiomycetes</taxon>
        <taxon>Eurotiomycetidae</taxon>
        <taxon>Eurotiales</taxon>
        <taxon>Aspergillaceae</taxon>
        <taxon>Aspergillus</taxon>
        <taxon>Aspergillus subgen. Circumdati</taxon>
    </lineage>
</organism>
<accession>Q0CRQ4</accession>
<evidence type="ECO:0000250" key="1">
    <source>
        <dbReference type="UniProtKB" id="Q6RKB1"/>
    </source>
</evidence>
<evidence type="ECO:0000255" key="2"/>
<evidence type="ECO:0000255" key="3">
    <source>
        <dbReference type="PROSITE-ProRule" id="PRU00258"/>
    </source>
</evidence>
<evidence type="ECO:0000269" key="4">
    <source>
    </source>
</evidence>
<evidence type="ECO:0000269" key="5">
    <source>
    </source>
</evidence>
<evidence type="ECO:0000303" key="6">
    <source>
    </source>
</evidence>
<evidence type="ECO:0000303" key="7">
    <source>
    </source>
</evidence>
<evidence type="ECO:0000305" key="8"/>
<evidence type="ECO:0000305" key="9">
    <source>
    </source>
</evidence>
<evidence type="ECO:0000305" key="10">
    <source>
    </source>
</evidence>
<name>5MOAR_ASPTN</name>
<gene>
    <name type="ORF">ATEG_03630</name>
</gene>
<keyword id="KW-0067">ATP-binding</keyword>
<keyword id="KW-0521">NADP</keyword>
<keyword id="KW-0547">Nucleotide-binding</keyword>
<keyword id="KW-0560">Oxidoreductase</keyword>
<keyword id="KW-0596">Phosphopantetheine</keyword>
<keyword id="KW-0597">Phosphoprotein</keyword>
<keyword id="KW-1185">Reference proteome</keyword>
<dbReference type="EC" id="1.2.1.-" evidence="4"/>
<dbReference type="EMBL" id="CH476598">
    <property type="protein sequence ID" value="EAU35432.1"/>
    <property type="molecule type" value="Genomic_DNA"/>
</dbReference>
<dbReference type="RefSeq" id="XP_001212808.1">
    <property type="nucleotide sequence ID" value="XM_001212808.1"/>
</dbReference>
<dbReference type="SMR" id="Q0CRQ4"/>
<dbReference type="STRING" id="341663.Q0CRQ4"/>
<dbReference type="EnsemblFungi" id="EAU35432">
    <property type="protein sequence ID" value="EAU35432"/>
    <property type="gene ID" value="ATEG_03630"/>
</dbReference>
<dbReference type="GeneID" id="4318786"/>
<dbReference type="VEuPathDB" id="FungiDB:ATEG_03630"/>
<dbReference type="eggNOG" id="KOG1176">
    <property type="taxonomic scope" value="Eukaryota"/>
</dbReference>
<dbReference type="eggNOG" id="KOG1178">
    <property type="taxonomic scope" value="Eukaryota"/>
</dbReference>
<dbReference type="HOGENOM" id="CLU_002220_2_1_1"/>
<dbReference type="OMA" id="AWPMNFK"/>
<dbReference type="OrthoDB" id="329835at2759"/>
<dbReference type="Proteomes" id="UP000007963">
    <property type="component" value="Unassembled WGS sequence"/>
</dbReference>
<dbReference type="GO" id="GO:0005524">
    <property type="term" value="F:ATP binding"/>
    <property type="evidence" value="ECO:0007669"/>
    <property type="project" value="UniProtKB-KW"/>
</dbReference>
<dbReference type="GO" id="GO:0016491">
    <property type="term" value="F:oxidoreductase activity"/>
    <property type="evidence" value="ECO:0007669"/>
    <property type="project" value="UniProtKB-KW"/>
</dbReference>
<dbReference type="Gene3D" id="1.10.1200.10">
    <property type="entry name" value="ACP-like"/>
    <property type="match status" value="1"/>
</dbReference>
<dbReference type="Gene3D" id="3.40.50.12780">
    <property type="entry name" value="N-terminal domain of ligase-like"/>
    <property type="match status" value="1"/>
</dbReference>
<dbReference type="Gene3D" id="3.40.50.720">
    <property type="entry name" value="NAD(P)-binding Rossmann-like Domain"/>
    <property type="match status" value="1"/>
</dbReference>
<dbReference type="InterPro" id="IPR036736">
    <property type="entry name" value="ACP-like_sf"/>
</dbReference>
<dbReference type="InterPro" id="IPR051414">
    <property type="entry name" value="Adenylate-forming_Reductase"/>
</dbReference>
<dbReference type="InterPro" id="IPR020845">
    <property type="entry name" value="AMP-binding_CS"/>
</dbReference>
<dbReference type="InterPro" id="IPR000873">
    <property type="entry name" value="AMP-dep_synth/lig_dom"/>
</dbReference>
<dbReference type="InterPro" id="IPR042099">
    <property type="entry name" value="ANL_N_sf"/>
</dbReference>
<dbReference type="InterPro" id="IPR013120">
    <property type="entry name" value="Far_NAD-bd"/>
</dbReference>
<dbReference type="InterPro" id="IPR036291">
    <property type="entry name" value="NAD(P)-bd_dom_sf"/>
</dbReference>
<dbReference type="PANTHER" id="PTHR43439:SF2">
    <property type="entry name" value="ENZYME, PUTATIVE (JCVI)-RELATED"/>
    <property type="match status" value="1"/>
</dbReference>
<dbReference type="PANTHER" id="PTHR43439">
    <property type="entry name" value="PHENYLACETATE-COENZYME A LIGASE"/>
    <property type="match status" value="1"/>
</dbReference>
<dbReference type="Pfam" id="PF00501">
    <property type="entry name" value="AMP-binding"/>
    <property type="match status" value="1"/>
</dbReference>
<dbReference type="Pfam" id="PF23562">
    <property type="entry name" value="AMP-binding_C_3"/>
    <property type="match status" value="1"/>
</dbReference>
<dbReference type="Pfam" id="PF07993">
    <property type="entry name" value="NAD_binding_4"/>
    <property type="match status" value="1"/>
</dbReference>
<dbReference type="SUPFAM" id="SSF56801">
    <property type="entry name" value="Acetyl-CoA synthetase-like"/>
    <property type="match status" value="1"/>
</dbReference>
<dbReference type="SUPFAM" id="SSF51735">
    <property type="entry name" value="NAD(P)-binding Rossmann-fold domains"/>
    <property type="match status" value="1"/>
</dbReference>
<dbReference type="PROSITE" id="PS00455">
    <property type="entry name" value="AMP_BINDING"/>
    <property type="match status" value="1"/>
</dbReference>
<reference key="1">
    <citation type="submission" date="2005-09" db="EMBL/GenBank/DDBJ databases">
        <title>Annotation of the Aspergillus terreus NIH2624 genome.</title>
        <authorList>
            <person name="Birren B.W."/>
            <person name="Lander E.S."/>
            <person name="Galagan J.E."/>
            <person name="Nusbaum C."/>
            <person name="Devon K."/>
            <person name="Henn M."/>
            <person name="Ma L.-J."/>
            <person name="Jaffe D.B."/>
            <person name="Butler J."/>
            <person name="Alvarez P."/>
            <person name="Gnerre S."/>
            <person name="Grabherr M."/>
            <person name="Kleber M."/>
            <person name="Mauceli E.W."/>
            <person name="Brockman W."/>
            <person name="Rounsley S."/>
            <person name="Young S.K."/>
            <person name="LaButti K."/>
            <person name="Pushparaj V."/>
            <person name="DeCaprio D."/>
            <person name="Crawford M."/>
            <person name="Koehrsen M."/>
            <person name="Engels R."/>
            <person name="Montgomery P."/>
            <person name="Pearson M."/>
            <person name="Howarth C."/>
            <person name="Larson L."/>
            <person name="Luoma S."/>
            <person name="White J."/>
            <person name="Alvarado L."/>
            <person name="Kodira C.D."/>
            <person name="Zeng Q."/>
            <person name="Oleary S."/>
            <person name="Yandava C."/>
            <person name="Denning D.W."/>
            <person name="Nierman W.C."/>
            <person name="Milne T."/>
            <person name="Madden K."/>
        </authorList>
    </citation>
    <scope>NUCLEOTIDE SEQUENCE [LARGE SCALE GENOMIC DNA]</scope>
    <source>
        <strain>NIH 2624 / FGSC A1156</strain>
    </source>
</reference>
<reference key="2">
    <citation type="journal article" date="2013" name="J. Am. Chem. Soc.">
        <title>An efficient system for heterologous expression of secondary metabolite genes in Aspergillus nidulans.</title>
        <authorList>
            <person name="Chiang Y.M."/>
            <person name="Oakley C.E."/>
            <person name="Ahuja M."/>
            <person name="Entwistle R."/>
            <person name="Schultz A."/>
            <person name="Chang S.L."/>
            <person name="Sung C.T."/>
            <person name="Wang C.C."/>
            <person name="Oakley B.R."/>
        </authorList>
    </citation>
    <scope>FUNCTION</scope>
</reference>
<reference key="3">
    <citation type="journal article" date="2014" name="Chem. Biol.">
        <title>Aryl-aldehyde formation in fungal polyketides: discovery and characterization of a distinct biosynthetic mechanism.</title>
        <authorList>
            <person name="Wang M."/>
            <person name="Beissner M."/>
            <person name="Zhao H."/>
        </authorList>
    </citation>
    <scope>FUNCTION</scope>
    <scope>CATALYTIC ACTIVITY</scope>
    <scope>DOMAIN</scope>
    <scope>MUTAGENESIS OF SER-612; THR-690; TYR-863 AND LYS-867</scope>
    <scope>PATHWAY</scope>
</reference>
<reference key="4">
    <citation type="journal article" date="2020" name="Angew. Chem. Int. Ed.">
        <title>Collaborative biosynthesis of a class of bioactive azaphilones by two separate gene clusters containing four PKS/NRPSs with transcriptional cosstalk in fungi.</title>
        <authorList>
            <person name="Huang X."/>
            <person name="Zhang W."/>
            <person name="Tang S."/>
            <person name="Wei S."/>
            <person name="Lu X."/>
        </authorList>
    </citation>
    <scope>FUNCTION</scope>
    <scope>INDUCTION</scope>
    <scope>DISRUPTION PHENOTYPE</scope>
    <scope>CATALYTIC ACTIVITY</scope>
    <scope>PATHWAY</scope>
    <scope>BIOTECHNOLOGY</scope>
</reference>
<proteinExistence type="evidence at protein level"/>
<comment type="function">
    <text evidence="4 5 10">Non-canonical non-ribosomal peptide synthetase; part of the cluster A that mediates the biosynthesis of azasperpyranones, members of the azaphilone family that exhibit anti-cancer activities (PubMed:31908094). Azasperpyranones are synthesized by 2 clusters, A and B (PubMed:31908094). Cluster A is responsible for the production of the polyhydric phenol moiety while the azaphilonoid scaffold is produced by the cluster B (PubMed:31908094). The non-reducing polyketide synthase ATEG_03629 produces 5-methyl orsellinic acid, which is then reduced to 5-methyl orsellinic aldehyde by the NRPS-like protein ATEG_03630 (PubMed:24412543). 5-methyl orsellinic aldehyde is then first hydroxylated by the FAD-dependent monooxygenase ATEG_03635 and subsequently hydroxylated by the cytochrome P450 monooxygenase ATEG_03631 to produce the unstable polyhydric phenol precursor of azasperpyranones (PubMed:31908094). On the other hand, the polyketide synthase ATEG_07659 is responsible for producing the 3,5-dimethyloctadienone moiety from acetyl-CoA, three malonyl-CoA, and two S-adenosyl methionines (SAM) (Probable). The 3,5-dimethyloctadienone moiety is then loaded onto the SAT domain of ATEG_07661 and extended with four malonyl-CoA and one SAM, which leads to the formation of 2,4-dihydroxy-6-(5,7-dimethyl-2-oxo-trans-3-trans-5-nonadienyl)-3-methylbenzaldehyde (compound 8) after reductive release and aldol condensation (Probable). The FAD-dependent monooxygenase ATEG_07662 is the next enzyme in the biosynthesis sequence and hydroxylates the side chain at the benzylic position of compound 8 (Probable). In Aspergillus nidulans, afoF, the ortholog of the FAD-dependent oxygenase ATEG_07660, is the key enzyme for the biosynthesis of asperfuranone by catalyzing the hydroxylation at C-8 of to prevent the formation of a six-membered ring hemiacetal intermediate and thus facilitating the formation of a five-membered ring to produce asperfuranone (Probable). In Aspergillus terreus, ATEG_07660 is probably not functional, which leads to the formation of the six-membered ring hemiacetal intermediate presperpyranone instead of asperfuranone (Probable). Finally, ATEG_03636 is involved in the condensation of the polyhydric phenol moiety produced by cluster A and the perasperpyranone precursor produced by cluster B, to yield azasperpyranone A (Probable). Further modifications of azasperpyranone A result in the production of derivatives, including azasperpyranone B to F (PubMed:31908094).</text>
</comment>
<comment type="catalytic activity">
    <reaction evidence="4 5">
        <text>5-methylorsellinate + ATP + NADPH + H(+) = 2,4-dihydroxy 5,6-dimethylbenzaldehyde + AMP + diphosphate + NADP(+)</text>
        <dbReference type="Rhea" id="RHEA:63060"/>
        <dbReference type="ChEBI" id="CHEBI:15378"/>
        <dbReference type="ChEBI" id="CHEBI:30616"/>
        <dbReference type="ChEBI" id="CHEBI:33019"/>
        <dbReference type="ChEBI" id="CHEBI:57783"/>
        <dbReference type="ChEBI" id="CHEBI:58349"/>
        <dbReference type="ChEBI" id="CHEBI:146172"/>
        <dbReference type="ChEBI" id="CHEBI:146173"/>
        <dbReference type="ChEBI" id="CHEBI:456215"/>
    </reaction>
    <physiologicalReaction direction="left-to-right" evidence="4 5">
        <dbReference type="Rhea" id="RHEA:63061"/>
    </physiologicalReaction>
</comment>
<comment type="pathway">
    <text evidence="4 7">Secondary metabolite biosynthesis.</text>
</comment>
<comment type="induction">
    <text evidence="5">Expression is induced by the azasperpyranone cluster A-specific transcription factor ATEG_03638 which is itself regulated by the azasperpyranone transcriptional regulator ATEG_07667.</text>
</comment>
<comment type="domain">
    <text evidence="10">Contains three distinct domains: an adenylation (A) domain that activates the substrate amino acid which is subsequently covalently linked as a thioester (aminoacyl-S-PCP) to the 4'-phosphopantetheine prosthetic group of the second domain, the peptidyl carrier protein (PCP) domain, as well as a reductase (R) release domain.</text>
</comment>
<comment type="disruption phenotype">
    <text evidence="5">Abolishes the production of 5-methyl orsellinic aldehyde and azasperpyranone A(AZA-A) but accumulates 5-methyl orsellinic acid.</text>
</comment>
<comment type="biotechnology">
    <text evidence="5">Azasperpyranones display potential anti-cancer activities (PubMed:31908094). Azasperpyranones A, C, D, and F exhibit potent growth-inhibitory activity against the A549, HepG2, HCT-116, and HL-60 cell lines, with IC(50) values of 2.39-14.42 mm, respectively (PubMed:31908094). Moreover, azasperpyranone D significantly inhibits HCT-116 xenograft tumor growth in BALB/c-nu mice (PubMed:31908094). In addition, azasperpyranones A and C can bind with four kinds of therapeutic targets for cancer, eEF2K, FGFR, survivin, and TNF-a (PubMed:31908094).</text>
</comment>
<comment type="similarity">
    <text evidence="8">Belongs to the adenylate-forming reductase family.</text>
</comment>
<sequence length="1069" mass="118882">MSPIAIDTAPFQRARVNLLHPEDPKAVKSIVQLLQFNAEHNPDHVFCLQLPSKQDDAIGNPIRITHLQFYRAVSYCTQRLQEEIDGLHGPRVNEDGTVTKCSPVVLFMESNVGLLIHLLALMSLGVPVAVLSARLSPTAVQHLMSSIRAQSVIASPRLKGTIEEAIASDNNTPAIGVRMYTQRPFEDDLENSRTLDLPATNEESHFISENDRNVLILHSSGTTGLPKPIYQPHRYLLNYSECHELGPDDALGTVLSALPLFHGFGLVAPCLAMTVGKPFMLPPSNTIPTGSLIIELIQSFQPTALMTVPHILEEITTLPPEQSISALQPLEFVLCGGGPLKISVAEALAASGVNLLAHFGTTETGPLGVVFVPTPDYDWHYWKLRQDINYRLDEVDANSADGNQYKLTVHPFGWDSAFEIQDILLSRGAEYKHHLRAVGRKDDLIVLANGEKLVPRVLETLLMQDERVKSAVAFGEGKFEIGVIVEPTHKVSDEEDFKAALWAIVLEAGAQMDSHAQVSSPSSIILATPEKPVPRSDKGSILRRETYRVYDEEISRVYEVLDRASEETTALNLQSDSLEEDLKDLIQREIGWKISPSEWLQDSDLFELGMNSLQAIRLHRLLLSSLPVDSRERVGADFVYRSPSVSKLGASLRHLAANENGHRNDPETEIDELICLNSFIARQDATVLLTGSTGNLGSNLLAHLTTLPRVKKVICLNRRGSDTSTAHTDLVERQLAIAKSKGVVIDPESASKIEVIPCDPSADFFGLPAEVYTHLTAQTTHILHNAWPMDFKRNVASFQSQFQYLNNLLRVAHDTRLCRPSIKPRFLFVSSIAVVGQYPRTHGTRLIPEVPSDKSSIIEDFGYGKAKYVCEEIMRAAADRYPEMQLGIVRVGQMSGSSRTGYWNPKEHFPTLIKFASMVGQLPAIKQTLSWIAVDNAATVLSDILFAPSLSGIYHLENPIRQAWQDVLDIFASSLYINTVNVPFDQWLRNVQAAVQELGTEDERMEYDLLAEFLEKDFQRMATGKVILDTSRSRAVSETLREVGEISEEVVWKYVREWRRAGTLRAPLE</sequence>